<accession>B1JDW9</accession>
<evidence type="ECO:0000250" key="1"/>
<evidence type="ECO:0000255" key="2">
    <source>
        <dbReference type="HAMAP-Rule" id="MF_00403"/>
    </source>
</evidence>
<evidence type="ECO:0000256" key="3">
    <source>
        <dbReference type="SAM" id="MobiDB-lite"/>
    </source>
</evidence>
<evidence type="ECO:0000305" key="4"/>
<comment type="function">
    <text evidence="2">With S4 and S5 plays an important role in translational accuracy.</text>
</comment>
<comment type="function">
    <text evidence="2">Interacts with and stabilizes bases of the 16S rRNA that are involved in tRNA selection in the A site and with the mRNA backbone. Located at the interface of the 30S and 50S subunits, it traverses the body of the 30S subunit contacting proteins on the other side and probably holding the rRNA structure together. The combined cluster of proteins S8, S12 and S17 appears to hold together the shoulder and platform of the 30S subunit.</text>
</comment>
<comment type="subunit">
    <text evidence="2">Part of the 30S ribosomal subunit. Contacts proteins S8 and S17. May interact with IF1 in the 30S initiation complex.</text>
</comment>
<comment type="similarity">
    <text evidence="2">Belongs to the universal ribosomal protein uS12 family.</text>
</comment>
<organism>
    <name type="scientific">Pseudomonas putida (strain W619)</name>
    <dbReference type="NCBI Taxonomy" id="390235"/>
    <lineage>
        <taxon>Bacteria</taxon>
        <taxon>Pseudomonadati</taxon>
        <taxon>Pseudomonadota</taxon>
        <taxon>Gammaproteobacteria</taxon>
        <taxon>Pseudomonadales</taxon>
        <taxon>Pseudomonadaceae</taxon>
        <taxon>Pseudomonas</taxon>
    </lineage>
</organism>
<proteinExistence type="inferred from homology"/>
<dbReference type="EMBL" id="CP000949">
    <property type="protein sequence ID" value="ACA75230.1"/>
    <property type="molecule type" value="Genomic_DNA"/>
</dbReference>
<dbReference type="SMR" id="B1JDW9"/>
<dbReference type="STRING" id="390235.PputW619_4754"/>
<dbReference type="KEGG" id="ppw:PputW619_4754"/>
<dbReference type="eggNOG" id="COG0048">
    <property type="taxonomic scope" value="Bacteria"/>
</dbReference>
<dbReference type="HOGENOM" id="CLU_104295_1_2_6"/>
<dbReference type="OrthoDB" id="9802366at2"/>
<dbReference type="GO" id="GO:0015935">
    <property type="term" value="C:small ribosomal subunit"/>
    <property type="evidence" value="ECO:0007669"/>
    <property type="project" value="InterPro"/>
</dbReference>
<dbReference type="GO" id="GO:0019843">
    <property type="term" value="F:rRNA binding"/>
    <property type="evidence" value="ECO:0007669"/>
    <property type="project" value="UniProtKB-UniRule"/>
</dbReference>
<dbReference type="GO" id="GO:0003735">
    <property type="term" value="F:structural constituent of ribosome"/>
    <property type="evidence" value="ECO:0007669"/>
    <property type="project" value="InterPro"/>
</dbReference>
<dbReference type="GO" id="GO:0000049">
    <property type="term" value="F:tRNA binding"/>
    <property type="evidence" value="ECO:0007669"/>
    <property type="project" value="UniProtKB-UniRule"/>
</dbReference>
<dbReference type="GO" id="GO:0006412">
    <property type="term" value="P:translation"/>
    <property type="evidence" value="ECO:0007669"/>
    <property type="project" value="UniProtKB-UniRule"/>
</dbReference>
<dbReference type="CDD" id="cd03368">
    <property type="entry name" value="Ribosomal_S12"/>
    <property type="match status" value="1"/>
</dbReference>
<dbReference type="FunFam" id="2.40.50.140:FF:000001">
    <property type="entry name" value="30S ribosomal protein S12"/>
    <property type="match status" value="1"/>
</dbReference>
<dbReference type="Gene3D" id="2.40.50.140">
    <property type="entry name" value="Nucleic acid-binding proteins"/>
    <property type="match status" value="1"/>
</dbReference>
<dbReference type="HAMAP" id="MF_00403_B">
    <property type="entry name" value="Ribosomal_uS12_B"/>
    <property type="match status" value="1"/>
</dbReference>
<dbReference type="InterPro" id="IPR012340">
    <property type="entry name" value="NA-bd_OB-fold"/>
</dbReference>
<dbReference type="InterPro" id="IPR006032">
    <property type="entry name" value="Ribosomal_uS12"/>
</dbReference>
<dbReference type="InterPro" id="IPR005679">
    <property type="entry name" value="Ribosomal_uS12_bac"/>
</dbReference>
<dbReference type="NCBIfam" id="TIGR00981">
    <property type="entry name" value="rpsL_bact"/>
    <property type="match status" value="1"/>
</dbReference>
<dbReference type="PANTHER" id="PTHR11652">
    <property type="entry name" value="30S RIBOSOMAL PROTEIN S12 FAMILY MEMBER"/>
    <property type="match status" value="1"/>
</dbReference>
<dbReference type="Pfam" id="PF00164">
    <property type="entry name" value="Ribosom_S12_S23"/>
    <property type="match status" value="1"/>
</dbReference>
<dbReference type="PIRSF" id="PIRSF002133">
    <property type="entry name" value="Ribosomal_S12/S23"/>
    <property type="match status" value="1"/>
</dbReference>
<dbReference type="PRINTS" id="PR01034">
    <property type="entry name" value="RIBOSOMALS12"/>
</dbReference>
<dbReference type="SUPFAM" id="SSF50249">
    <property type="entry name" value="Nucleic acid-binding proteins"/>
    <property type="match status" value="1"/>
</dbReference>
<dbReference type="PROSITE" id="PS00055">
    <property type="entry name" value="RIBOSOMAL_S12"/>
    <property type="match status" value="1"/>
</dbReference>
<keyword id="KW-0488">Methylation</keyword>
<keyword id="KW-0687">Ribonucleoprotein</keyword>
<keyword id="KW-0689">Ribosomal protein</keyword>
<keyword id="KW-0694">RNA-binding</keyword>
<keyword id="KW-0699">rRNA-binding</keyword>
<keyword id="KW-0820">tRNA-binding</keyword>
<reference key="1">
    <citation type="submission" date="2008-02" db="EMBL/GenBank/DDBJ databases">
        <title>Complete sequence of Pseudomonas putida W619.</title>
        <authorList>
            <person name="Copeland A."/>
            <person name="Lucas S."/>
            <person name="Lapidus A."/>
            <person name="Barry K."/>
            <person name="Detter J.C."/>
            <person name="Glavina del Rio T."/>
            <person name="Dalin E."/>
            <person name="Tice H."/>
            <person name="Pitluck S."/>
            <person name="Chain P."/>
            <person name="Malfatti S."/>
            <person name="Shin M."/>
            <person name="Vergez L."/>
            <person name="Schmutz J."/>
            <person name="Larimer F."/>
            <person name="Land M."/>
            <person name="Hauser L."/>
            <person name="Kyrpides N."/>
            <person name="Kim E."/>
            <person name="Taghavi S."/>
            <person name="Vangronsveld D."/>
            <person name="van der Lelie D."/>
            <person name="Richardson P."/>
        </authorList>
    </citation>
    <scope>NUCLEOTIDE SEQUENCE [LARGE SCALE GENOMIC DNA]</scope>
    <source>
        <strain>W619</strain>
    </source>
</reference>
<gene>
    <name evidence="2" type="primary">rpsL</name>
    <name type="ordered locus">PputW619_4754</name>
</gene>
<feature type="chain" id="PRO_1000194212" description="Small ribosomal subunit protein uS12">
    <location>
        <begin position="1"/>
        <end position="123"/>
    </location>
</feature>
<feature type="region of interest" description="Disordered" evidence="3">
    <location>
        <begin position="1"/>
        <end position="22"/>
    </location>
</feature>
<feature type="region of interest" description="Disordered" evidence="3">
    <location>
        <begin position="100"/>
        <end position="123"/>
    </location>
</feature>
<feature type="compositionally biased region" description="Basic residues" evidence="3">
    <location>
        <begin position="111"/>
        <end position="123"/>
    </location>
</feature>
<feature type="modified residue" description="3-methylthioaspartic acid" evidence="1">
    <location>
        <position position="89"/>
    </location>
</feature>
<name>RS12_PSEPW</name>
<sequence>MATINQLVRQPRKRSVEKSDVPALQNCPQRRGVCTRVYTTTPKKPNSALRKVCRVRLTNGFEVSSYIGGEGHNLQEHSVVLIRGGRVKDLPGVRYHTVRGSLDTSGVKGRNQGRSKYGTKRPK</sequence>
<protein>
    <recommendedName>
        <fullName evidence="2">Small ribosomal subunit protein uS12</fullName>
    </recommendedName>
    <alternativeName>
        <fullName evidence="4">30S ribosomal protein S12</fullName>
    </alternativeName>
</protein>